<keyword id="KW-0028">Amino-acid biosynthesis</keyword>
<keyword id="KW-0057">Aromatic amino acid biosynthesis</keyword>
<keyword id="KW-0963">Cytoplasm</keyword>
<keyword id="KW-1185">Reference proteome</keyword>
<keyword id="KW-0808">Transferase</keyword>
<protein>
    <recommendedName>
        <fullName evidence="1">3-phosphoshikimate 1-carboxyvinyltransferase</fullName>
        <ecNumber evidence="1">2.5.1.19</ecNumber>
    </recommendedName>
    <alternativeName>
        <fullName evidence="1">5-enolpyruvylshikimate-3-phosphate synthase</fullName>
        <shortName evidence="1">EPSP synthase</shortName>
        <shortName evidence="1">EPSPS</shortName>
    </alternativeName>
</protein>
<feature type="chain" id="PRO_0000088254" description="3-phosphoshikimate 1-carboxyvinyltransferase">
    <location>
        <begin position="1"/>
        <end position="427"/>
    </location>
</feature>
<feature type="active site" description="Proton acceptor" evidence="1">
    <location>
        <position position="313"/>
    </location>
</feature>
<feature type="binding site" evidence="1">
    <location>
        <position position="22"/>
    </location>
    <ligand>
        <name>3-phosphoshikimate</name>
        <dbReference type="ChEBI" id="CHEBI:145989"/>
    </ligand>
</feature>
<feature type="binding site" evidence="1">
    <location>
        <position position="22"/>
    </location>
    <ligand>
        <name>phosphoenolpyruvate</name>
        <dbReference type="ChEBI" id="CHEBI:58702"/>
    </ligand>
</feature>
<feature type="binding site" evidence="1">
    <location>
        <position position="23"/>
    </location>
    <ligand>
        <name>3-phosphoshikimate</name>
        <dbReference type="ChEBI" id="CHEBI:145989"/>
    </ligand>
</feature>
<feature type="binding site" evidence="1">
    <location>
        <position position="27"/>
    </location>
    <ligand>
        <name>3-phosphoshikimate</name>
        <dbReference type="ChEBI" id="CHEBI:145989"/>
    </ligand>
</feature>
<feature type="binding site" evidence="1">
    <location>
        <position position="96"/>
    </location>
    <ligand>
        <name>phosphoenolpyruvate</name>
        <dbReference type="ChEBI" id="CHEBI:58702"/>
    </ligand>
</feature>
<feature type="binding site" evidence="1">
    <location>
        <position position="124"/>
    </location>
    <ligand>
        <name>phosphoenolpyruvate</name>
        <dbReference type="ChEBI" id="CHEBI:58702"/>
    </ligand>
</feature>
<feature type="binding site" evidence="1">
    <location>
        <position position="169"/>
    </location>
    <ligand>
        <name>3-phosphoshikimate</name>
        <dbReference type="ChEBI" id="CHEBI:145989"/>
    </ligand>
</feature>
<feature type="binding site" evidence="1">
    <location>
        <position position="170"/>
    </location>
    <ligand>
        <name>3-phosphoshikimate</name>
        <dbReference type="ChEBI" id="CHEBI:145989"/>
    </ligand>
</feature>
<feature type="binding site" evidence="1">
    <location>
        <position position="171"/>
    </location>
    <ligand>
        <name>3-phosphoshikimate</name>
        <dbReference type="ChEBI" id="CHEBI:145989"/>
    </ligand>
</feature>
<feature type="binding site" evidence="1">
    <location>
        <position position="171"/>
    </location>
    <ligand>
        <name>phosphoenolpyruvate</name>
        <dbReference type="ChEBI" id="CHEBI:58702"/>
    </ligand>
</feature>
<feature type="binding site" evidence="1">
    <location>
        <position position="197"/>
    </location>
    <ligand>
        <name>3-phosphoshikimate</name>
        <dbReference type="ChEBI" id="CHEBI:145989"/>
    </ligand>
</feature>
<feature type="binding site" evidence="1">
    <location>
        <position position="313"/>
    </location>
    <ligand>
        <name>3-phosphoshikimate</name>
        <dbReference type="ChEBI" id="CHEBI:145989"/>
    </ligand>
</feature>
<feature type="binding site" evidence="1">
    <location>
        <position position="336"/>
    </location>
    <ligand>
        <name>3-phosphoshikimate</name>
        <dbReference type="ChEBI" id="CHEBI:145989"/>
    </ligand>
</feature>
<feature type="binding site" evidence="1">
    <location>
        <position position="340"/>
    </location>
    <ligand>
        <name>3-phosphoshikimate</name>
        <dbReference type="ChEBI" id="CHEBI:145989"/>
    </ligand>
</feature>
<feature type="binding site" evidence="1">
    <location>
        <position position="344"/>
    </location>
    <ligand>
        <name>phosphoenolpyruvate</name>
        <dbReference type="ChEBI" id="CHEBI:58702"/>
    </ligand>
</feature>
<feature type="binding site" evidence="1">
    <location>
        <position position="386"/>
    </location>
    <ligand>
        <name>phosphoenolpyruvate</name>
        <dbReference type="ChEBI" id="CHEBI:58702"/>
    </ligand>
</feature>
<feature type="binding site" evidence="1">
    <location>
        <position position="411"/>
    </location>
    <ligand>
        <name>phosphoenolpyruvate</name>
        <dbReference type="ChEBI" id="CHEBI:58702"/>
    </ligand>
</feature>
<accession>P0A6D4</accession>
<accession>P07638</accession>
<accession>P78222</accession>
<organism>
    <name type="scientific">Escherichia coli O157:H7</name>
    <dbReference type="NCBI Taxonomy" id="83334"/>
    <lineage>
        <taxon>Bacteria</taxon>
        <taxon>Pseudomonadati</taxon>
        <taxon>Pseudomonadota</taxon>
        <taxon>Gammaproteobacteria</taxon>
        <taxon>Enterobacterales</taxon>
        <taxon>Enterobacteriaceae</taxon>
        <taxon>Escherichia</taxon>
    </lineage>
</organism>
<dbReference type="EC" id="2.5.1.19" evidence="1"/>
<dbReference type="EMBL" id="AE005174">
    <property type="protein sequence ID" value="AAG55393.1"/>
    <property type="molecule type" value="Genomic_DNA"/>
</dbReference>
<dbReference type="EMBL" id="BA000007">
    <property type="protein sequence ID" value="BAB34414.1"/>
    <property type="molecule type" value="Genomic_DNA"/>
</dbReference>
<dbReference type="PIR" id="E85616">
    <property type="entry name" value="E85616"/>
</dbReference>
<dbReference type="PIR" id="G90752">
    <property type="entry name" value="G90752"/>
</dbReference>
<dbReference type="RefSeq" id="NP_309018.1">
    <property type="nucleotide sequence ID" value="NC_002695.1"/>
</dbReference>
<dbReference type="RefSeq" id="WP_000445231.1">
    <property type="nucleotide sequence ID" value="NZ_VOAI01000006.1"/>
</dbReference>
<dbReference type="SMR" id="P0A6D4"/>
<dbReference type="STRING" id="155864.Z1254"/>
<dbReference type="GeneID" id="917735"/>
<dbReference type="GeneID" id="93776510"/>
<dbReference type="KEGG" id="ece:Z1254"/>
<dbReference type="KEGG" id="ecs:ECs_0991"/>
<dbReference type="PATRIC" id="fig|386585.9.peg.1110"/>
<dbReference type="eggNOG" id="COG0128">
    <property type="taxonomic scope" value="Bacteria"/>
</dbReference>
<dbReference type="HOGENOM" id="CLU_024321_0_0_6"/>
<dbReference type="OMA" id="YEDHRMA"/>
<dbReference type="UniPathway" id="UPA00053">
    <property type="reaction ID" value="UER00089"/>
</dbReference>
<dbReference type="Proteomes" id="UP000000558">
    <property type="component" value="Chromosome"/>
</dbReference>
<dbReference type="Proteomes" id="UP000002519">
    <property type="component" value="Chromosome"/>
</dbReference>
<dbReference type="GO" id="GO:0005737">
    <property type="term" value="C:cytoplasm"/>
    <property type="evidence" value="ECO:0007669"/>
    <property type="project" value="UniProtKB-SubCell"/>
</dbReference>
<dbReference type="GO" id="GO:0003866">
    <property type="term" value="F:3-phosphoshikimate 1-carboxyvinyltransferase activity"/>
    <property type="evidence" value="ECO:0007669"/>
    <property type="project" value="UniProtKB-UniRule"/>
</dbReference>
<dbReference type="GO" id="GO:0008652">
    <property type="term" value="P:amino acid biosynthetic process"/>
    <property type="evidence" value="ECO:0007669"/>
    <property type="project" value="UniProtKB-KW"/>
</dbReference>
<dbReference type="GO" id="GO:0009073">
    <property type="term" value="P:aromatic amino acid family biosynthetic process"/>
    <property type="evidence" value="ECO:0007669"/>
    <property type="project" value="UniProtKB-KW"/>
</dbReference>
<dbReference type="GO" id="GO:0009423">
    <property type="term" value="P:chorismate biosynthetic process"/>
    <property type="evidence" value="ECO:0007669"/>
    <property type="project" value="UniProtKB-UniRule"/>
</dbReference>
<dbReference type="CDD" id="cd01554">
    <property type="entry name" value="EPT-like"/>
    <property type="match status" value="1"/>
</dbReference>
<dbReference type="FunFam" id="3.65.10.10:FF:000003">
    <property type="entry name" value="3-phosphoshikimate 1-carboxyvinyltransferase"/>
    <property type="match status" value="1"/>
</dbReference>
<dbReference type="FunFam" id="3.65.10.10:FF:000004">
    <property type="entry name" value="3-phosphoshikimate 1-carboxyvinyltransferase"/>
    <property type="match status" value="1"/>
</dbReference>
<dbReference type="Gene3D" id="3.65.10.10">
    <property type="entry name" value="Enolpyruvate transferase domain"/>
    <property type="match status" value="2"/>
</dbReference>
<dbReference type="HAMAP" id="MF_00210">
    <property type="entry name" value="EPSP_synth"/>
    <property type="match status" value="1"/>
</dbReference>
<dbReference type="InterPro" id="IPR001986">
    <property type="entry name" value="Enolpyruvate_Tfrase_dom"/>
</dbReference>
<dbReference type="InterPro" id="IPR036968">
    <property type="entry name" value="Enolpyruvate_Tfrase_sf"/>
</dbReference>
<dbReference type="InterPro" id="IPR006264">
    <property type="entry name" value="EPSP_synthase"/>
</dbReference>
<dbReference type="InterPro" id="IPR023193">
    <property type="entry name" value="EPSP_synthase_CS"/>
</dbReference>
<dbReference type="InterPro" id="IPR013792">
    <property type="entry name" value="RNA3'P_cycl/enolpyr_Trfase_a/b"/>
</dbReference>
<dbReference type="NCBIfam" id="TIGR01356">
    <property type="entry name" value="aroA"/>
    <property type="match status" value="1"/>
</dbReference>
<dbReference type="PANTHER" id="PTHR21090">
    <property type="entry name" value="AROM/DEHYDROQUINATE SYNTHASE"/>
    <property type="match status" value="1"/>
</dbReference>
<dbReference type="PANTHER" id="PTHR21090:SF5">
    <property type="entry name" value="PENTAFUNCTIONAL AROM POLYPEPTIDE"/>
    <property type="match status" value="1"/>
</dbReference>
<dbReference type="Pfam" id="PF00275">
    <property type="entry name" value="EPSP_synthase"/>
    <property type="match status" value="1"/>
</dbReference>
<dbReference type="PIRSF" id="PIRSF000505">
    <property type="entry name" value="EPSPS"/>
    <property type="match status" value="1"/>
</dbReference>
<dbReference type="SUPFAM" id="SSF55205">
    <property type="entry name" value="EPT/RTPC-like"/>
    <property type="match status" value="1"/>
</dbReference>
<dbReference type="PROSITE" id="PS00104">
    <property type="entry name" value="EPSP_SYNTHASE_1"/>
    <property type="match status" value="1"/>
</dbReference>
<dbReference type="PROSITE" id="PS00885">
    <property type="entry name" value="EPSP_SYNTHASE_2"/>
    <property type="match status" value="1"/>
</dbReference>
<comment type="function">
    <text evidence="1">Catalyzes the transfer of the enolpyruvyl moiety of phosphoenolpyruvate (PEP) to the 5-hydroxyl of shikimate-3-phosphate (S3P) to produce enolpyruvyl shikimate-3-phosphate and inorganic phosphate.</text>
</comment>
<comment type="catalytic activity">
    <reaction evidence="1">
        <text>3-phosphoshikimate + phosphoenolpyruvate = 5-O-(1-carboxyvinyl)-3-phosphoshikimate + phosphate</text>
        <dbReference type="Rhea" id="RHEA:21256"/>
        <dbReference type="ChEBI" id="CHEBI:43474"/>
        <dbReference type="ChEBI" id="CHEBI:57701"/>
        <dbReference type="ChEBI" id="CHEBI:58702"/>
        <dbReference type="ChEBI" id="CHEBI:145989"/>
        <dbReference type="EC" id="2.5.1.19"/>
    </reaction>
    <physiologicalReaction direction="left-to-right" evidence="1">
        <dbReference type="Rhea" id="RHEA:21257"/>
    </physiologicalReaction>
</comment>
<comment type="pathway">
    <text evidence="1">Metabolic intermediate biosynthesis; chorismate biosynthesis; chorismate from D-erythrose 4-phosphate and phosphoenolpyruvate: step 6/7.</text>
</comment>
<comment type="subunit">
    <text evidence="1">Monomer.</text>
</comment>
<comment type="subcellular location">
    <subcellularLocation>
        <location evidence="1">Cytoplasm</location>
    </subcellularLocation>
</comment>
<comment type="similarity">
    <text evidence="1 2">Belongs to the EPSP synthase family.</text>
</comment>
<proteinExistence type="inferred from homology"/>
<name>AROA_ECO57</name>
<gene>
    <name evidence="1" type="primary">aroA</name>
    <name type="ordered locus">Z1254</name>
    <name type="ordered locus">ECs0991</name>
</gene>
<sequence>MESLTLQPIARVDGTINLPGSKSVSNRALLLAALAHGKTVLTNLLDSDDVRHMLNALTALGVSYTLSADRTRCEIIGNGGPLHAEGALELFLGNAGTAMRPLAAALCLGSNDIVLTGEPRMKERPIGHLVDALRLGGAKITYLEQENYPPLRLQGGFTGGNVDVDGSVSSQFLTALLMTAPLAPEDTVIRIKGDLVSKPYIDITLNLMKTFGVEIENQHYQQFVVKGGQSYQSPGTYLVEGDASSASYFLAAAAIKGGTVKVTGIGRNSMQGDIRFADVLEKMGATICWGDDYISCTRGELNAIDMDMNHIPDAAMTIATAALFAKGTTTLRNIYNWRVKETDRLFAMATELRKVGAEVEEGHDYIRITPPEKLNFAEIATYNDHRMAMCFSLVALSDTPVTILDPKCTAKTFPDYFEQLARISQAA</sequence>
<reference key="1">
    <citation type="journal article" date="2001" name="Nature">
        <title>Genome sequence of enterohaemorrhagic Escherichia coli O157:H7.</title>
        <authorList>
            <person name="Perna N.T."/>
            <person name="Plunkett G. III"/>
            <person name="Burland V."/>
            <person name="Mau B."/>
            <person name="Glasner J.D."/>
            <person name="Rose D.J."/>
            <person name="Mayhew G.F."/>
            <person name="Evans P.S."/>
            <person name="Gregor J."/>
            <person name="Kirkpatrick H.A."/>
            <person name="Posfai G."/>
            <person name="Hackett J."/>
            <person name="Klink S."/>
            <person name="Boutin A."/>
            <person name="Shao Y."/>
            <person name="Miller L."/>
            <person name="Grotbeck E.J."/>
            <person name="Davis N.W."/>
            <person name="Lim A."/>
            <person name="Dimalanta E.T."/>
            <person name="Potamousis K."/>
            <person name="Apodaca J."/>
            <person name="Anantharaman T.S."/>
            <person name="Lin J."/>
            <person name="Yen G."/>
            <person name="Schwartz D.C."/>
            <person name="Welch R.A."/>
            <person name="Blattner F.R."/>
        </authorList>
    </citation>
    <scope>NUCLEOTIDE SEQUENCE [LARGE SCALE GENOMIC DNA]</scope>
    <source>
        <strain>O157:H7 / EDL933 / ATCC 700927 / EHEC</strain>
    </source>
</reference>
<reference key="2">
    <citation type="journal article" date="2001" name="DNA Res.">
        <title>Complete genome sequence of enterohemorrhagic Escherichia coli O157:H7 and genomic comparison with a laboratory strain K-12.</title>
        <authorList>
            <person name="Hayashi T."/>
            <person name="Makino K."/>
            <person name="Ohnishi M."/>
            <person name="Kurokawa K."/>
            <person name="Ishii K."/>
            <person name="Yokoyama K."/>
            <person name="Han C.-G."/>
            <person name="Ohtsubo E."/>
            <person name="Nakayama K."/>
            <person name="Murata T."/>
            <person name="Tanaka M."/>
            <person name="Tobe T."/>
            <person name="Iida T."/>
            <person name="Takami H."/>
            <person name="Honda T."/>
            <person name="Sasakawa C."/>
            <person name="Ogasawara N."/>
            <person name="Yasunaga T."/>
            <person name="Kuhara S."/>
            <person name="Shiba T."/>
            <person name="Hattori M."/>
            <person name="Shinagawa H."/>
        </authorList>
    </citation>
    <scope>NUCLEOTIDE SEQUENCE [LARGE SCALE GENOMIC DNA]</scope>
    <source>
        <strain>O157:H7 / Sakai / RIMD 0509952 / EHEC</strain>
    </source>
</reference>
<evidence type="ECO:0000255" key="1">
    <source>
        <dbReference type="HAMAP-Rule" id="MF_00210"/>
    </source>
</evidence>
<evidence type="ECO:0000305" key="2"/>